<dbReference type="EMBL" id="Z48930">
    <property type="protein sequence ID" value="CAA88765.1"/>
    <property type="molecule type" value="Genomic_DNA"/>
</dbReference>
<dbReference type="PIR" id="S62755">
    <property type="entry name" value="S62755"/>
</dbReference>
<dbReference type="SMR" id="P48935"/>
<dbReference type="UniPathway" id="UPA00223"/>
<dbReference type="GO" id="GO:0005743">
    <property type="term" value="C:mitochondrial inner membrane"/>
    <property type="evidence" value="ECO:0007669"/>
    <property type="project" value="UniProtKB-SubCell"/>
</dbReference>
<dbReference type="GO" id="GO:0009055">
    <property type="term" value="F:electron transfer activity"/>
    <property type="evidence" value="ECO:0007669"/>
    <property type="project" value="InterPro"/>
</dbReference>
<dbReference type="GO" id="GO:0046872">
    <property type="term" value="F:metal ion binding"/>
    <property type="evidence" value="ECO:0007669"/>
    <property type="project" value="UniProtKB-KW"/>
</dbReference>
<dbReference type="GO" id="GO:0006121">
    <property type="term" value="P:mitochondrial electron transport, succinate to ubiquinone"/>
    <property type="evidence" value="ECO:0007669"/>
    <property type="project" value="TreeGrafter"/>
</dbReference>
<dbReference type="GO" id="GO:0006099">
    <property type="term" value="P:tricarboxylic acid cycle"/>
    <property type="evidence" value="ECO:0007669"/>
    <property type="project" value="UniProtKB-UniPathway"/>
</dbReference>
<dbReference type="CDD" id="cd03499">
    <property type="entry name" value="SQR_TypeC_SdhC"/>
    <property type="match status" value="1"/>
</dbReference>
<dbReference type="Gene3D" id="1.20.1300.10">
    <property type="entry name" value="Fumarate reductase/succinate dehydrogenase, transmembrane subunit"/>
    <property type="match status" value="1"/>
</dbReference>
<dbReference type="InterPro" id="IPR034804">
    <property type="entry name" value="SQR/QFR_C/D"/>
</dbReference>
<dbReference type="InterPro" id="IPR018495">
    <property type="entry name" value="Succ_DH_cyt_bsu_CS"/>
</dbReference>
<dbReference type="InterPro" id="IPR014314">
    <property type="entry name" value="Succ_DH_cytb556"/>
</dbReference>
<dbReference type="InterPro" id="IPR000701">
    <property type="entry name" value="SuccDH_FuR_B_TM-su"/>
</dbReference>
<dbReference type="NCBIfam" id="TIGR02970">
    <property type="entry name" value="succ_dehyd_cytB"/>
    <property type="match status" value="1"/>
</dbReference>
<dbReference type="PANTHER" id="PTHR10978">
    <property type="entry name" value="SUCCINATE DEHYDROGENASE CYTOCHROME B560 SUBUNIT"/>
    <property type="match status" value="1"/>
</dbReference>
<dbReference type="PANTHER" id="PTHR10978:SF5">
    <property type="entry name" value="SUCCINATE DEHYDROGENASE CYTOCHROME B560 SUBUNIT, MITOCHONDRIAL"/>
    <property type="match status" value="1"/>
</dbReference>
<dbReference type="Pfam" id="PF01127">
    <property type="entry name" value="Sdh_cyt"/>
    <property type="match status" value="1"/>
</dbReference>
<dbReference type="PIRSF" id="PIRSF000178">
    <property type="entry name" value="SDH_cyt_b560"/>
    <property type="match status" value="1"/>
</dbReference>
<dbReference type="SUPFAM" id="SSF81343">
    <property type="entry name" value="Fumarate reductase respiratory complex transmembrane subunits"/>
    <property type="match status" value="1"/>
</dbReference>
<dbReference type="PROSITE" id="PS01000">
    <property type="entry name" value="SDH_CYT_1"/>
    <property type="match status" value="1"/>
</dbReference>
<dbReference type="PROSITE" id="PS01001">
    <property type="entry name" value="SDH_CYT_2"/>
    <property type="match status" value="1"/>
</dbReference>
<reference key="1">
    <citation type="journal article" date="1996" name="Curr. Genet.">
        <title>Genes for two subunits of succinate dehydrogenase form a cluster on the mitochondrial genome of Rhodophyta.</title>
        <authorList>
            <person name="Viehmann S."/>
            <person name="Richard O."/>
            <person name="Boyen C."/>
            <person name="Zetsche K."/>
        </authorList>
    </citation>
    <scope>NUCLEOTIDE SEQUENCE [GENOMIC DNA]</scope>
    <source>
        <strain>RK-1</strain>
    </source>
</reference>
<accession>P48935</accession>
<organism>
    <name type="scientific">Cyanidium caldarium</name>
    <name type="common">Red alga</name>
    <dbReference type="NCBI Taxonomy" id="2771"/>
    <lineage>
        <taxon>Eukaryota</taxon>
        <taxon>Rhodophyta</taxon>
        <taxon>Bangiophyceae</taxon>
        <taxon>Cyanidiales</taxon>
        <taxon>Cyanidiaceae</taxon>
        <taxon>Cyanidium</taxon>
    </lineage>
</organism>
<protein>
    <recommendedName>
        <fullName>Succinate dehydrogenase cytochrome b560 subunit</fullName>
    </recommendedName>
    <alternativeName>
        <fullName>Succinate dehydrogenase, subunit III</fullName>
    </alternativeName>
</protein>
<name>C560_CYACA</name>
<gene>
    <name type="primary">SDH3</name>
    <name type="synonym">SDHC</name>
</gene>
<comment type="function">
    <text evidence="1">Membrane-anchoring subunit of succinate dehydrogenase (SDH) that is involved in complex II of the mitochondrial electron transport chain and is responsible for transferring electrons from succinate to ubiquinone (coenzyme Q).</text>
</comment>
<comment type="cofactor">
    <cofactor evidence="1">
        <name>heme</name>
        <dbReference type="ChEBI" id="CHEBI:30413"/>
    </cofactor>
    <text evidence="1">The heme is bound between the two transmembrane subunits.</text>
</comment>
<comment type="pathway">
    <text>Carbohydrate metabolism; tricarboxylic acid cycle.</text>
</comment>
<comment type="subunit">
    <text>Forms part of complex II containing four subunits: a 70 kDa flavoprotein (FP), a 27 kDa iron-sulfur protein (IP), a cytochrome B and a membrane-anchoring protein.</text>
</comment>
<comment type="subcellular location">
    <subcellularLocation>
        <location evidence="1">Mitochondrion inner membrane</location>
        <topology evidence="1">Multi-pass membrane protein</topology>
    </subcellularLocation>
</comment>
<comment type="similarity">
    <text evidence="3">Belongs to the cytochrome b560 family.</text>
</comment>
<keyword id="KW-0249">Electron transport</keyword>
<keyword id="KW-0349">Heme</keyword>
<keyword id="KW-0408">Iron</keyword>
<keyword id="KW-0472">Membrane</keyword>
<keyword id="KW-0479">Metal-binding</keyword>
<keyword id="KW-0496">Mitochondrion</keyword>
<keyword id="KW-0999">Mitochondrion inner membrane</keyword>
<keyword id="KW-0812">Transmembrane</keyword>
<keyword id="KW-1133">Transmembrane helix</keyword>
<keyword id="KW-0813">Transport</keyword>
<keyword id="KW-0816">Tricarboxylic acid cycle</keyword>
<sequence>MFYKNRPLSPYVTIYSSQWTSISSIFHRLSGLYLVFFLFVLFCSIKFLFCFSTFWFVYKFVKTCFFFILSFFIVFIVFSMYSLFYHFFIGLRHLVWDEVILMEDNFVTMSTKLSLSLSLVLVLINCLRYFLV</sequence>
<geneLocation type="mitochondrion"/>
<feature type="chain" id="PRO_0000203518" description="Succinate dehydrogenase cytochrome b560 subunit">
    <location>
        <begin position="1"/>
        <end position="132"/>
    </location>
</feature>
<feature type="transmembrane region" description="Helical" evidence="2">
    <location>
        <begin position="32"/>
        <end position="49"/>
    </location>
</feature>
<feature type="transmembrane region" description="Helical" evidence="2">
    <location>
        <begin position="59"/>
        <end position="81"/>
    </location>
</feature>
<feature type="transmembrane region" description="Helical" evidence="2">
    <location>
        <begin position="107"/>
        <end position="127"/>
    </location>
</feature>
<feature type="binding site" description="axial binding residue" evidence="1">
    <location>
        <position position="86"/>
    </location>
    <ligand>
        <name>heme</name>
        <dbReference type="ChEBI" id="CHEBI:30413"/>
        <note>ligand shared with second transmembrane subunit</note>
    </ligand>
    <ligandPart>
        <name>Fe</name>
        <dbReference type="ChEBI" id="CHEBI:18248"/>
    </ligandPart>
</feature>
<proteinExistence type="inferred from homology"/>
<evidence type="ECO:0000250" key="1"/>
<evidence type="ECO:0000255" key="2"/>
<evidence type="ECO:0000305" key="3"/>